<reference key="1">
    <citation type="journal article" date="2008" name="J. Bacteriol.">
        <title>The complete genome sequence of Actinobacillus pleuropneumoniae L20 (serotype 5b).</title>
        <authorList>
            <person name="Foote S.J."/>
            <person name="Bosse J.T."/>
            <person name="Bouevitch A.B."/>
            <person name="Langford P.R."/>
            <person name="Young N.M."/>
            <person name="Nash J.H.E."/>
        </authorList>
    </citation>
    <scope>NUCLEOTIDE SEQUENCE [LARGE SCALE GENOMIC DNA]</scope>
    <source>
        <strain>L20</strain>
    </source>
</reference>
<dbReference type="EMBL" id="CP000569">
    <property type="protein sequence ID" value="ABN74107.1"/>
    <property type="molecule type" value="Genomic_DNA"/>
</dbReference>
<dbReference type="RefSeq" id="WP_009874824.1">
    <property type="nucleotide sequence ID" value="NC_009053.1"/>
</dbReference>
<dbReference type="SMR" id="A3N121"/>
<dbReference type="STRING" id="416269.APL_1013"/>
<dbReference type="EnsemblBacteria" id="ABN74107">
    <property type="protein sequence ID" value="ABN74107"/>
    <property type="gene ID" value="APL_1013"/>
</dbReference>
<dbReference type="KEGG" id="apl:APL_1013"/>
<dbReference type="PATRIC" id="fig|416269.6.peg.1060"/>
<dbReference type="eggNOG" id="COG0234">
    <property type="taxonomic scope" value="Bacteria"/>
</dbReference>
<dbReference type="HOGENOM" id="CLU_132825_1_1_6"/>
<dbReference type="Proteomes" id="UP000001432">
    <property type="component" value="Chromosome"/>
</dbReference>
<dbReference type="GO" id="GO:0005737">
    <property type="term" value="C:cytoplasm"/>
    <property type="evidence" value="ECO:0007669"/>
    <property type="project" value="UniProtKB-SubCell"/>
</dbReference>
<dbReference type="GO" id="GO:0005524">
    <property type="term" value="F:ATP binding"/>
    <property type="evidence" value="ECO:0007669"/>
    <property type="project" value="InterPro"/>
</dbReference>
<dbReference type="GO" id="GO:0046872">
    <property type="term" value="F:metal ion binding"/>
    <property type="evidence" value="ECO:0007669"/>
    <property type="project" value="TreeGrafter"/>
</dbReference>
<dbReference type="GO" id="GO:0044183">
    <property type="term" value="F:protein folding chaperone"/>
    <property type="evidence" value="ECO:0007669"/>
    <property type="project" value="InterPro"/>
</dbReference>
<dbReference type="GO" id="GO:0051087">
    <property type="term" value="F:protein-folding chaperone binding"/>
    <property type="evidence" value="ECO:0007669"/>
    <property type="project" value="TreeGrafter"/>
</dbReference>
<dbReference type="GO" id="GO:0051082">
    <property type="term" value="F:unfolded protein binding"/>
    <property type="evidence" value="ECO:0007669"/>
    <property type="project" value="TreeGrafter"/>
</dbReference>
<dbReference type="GO" id="GO:0051085">
    <property type="term" value="P:chaperone cofactor-dependent protein refolding"/>
    <property type="evidence" value="ECO:0007669"/>
    <property type="project" value="TreeGrafter"/>
</dbReference>
<dbReference type="CDD" id="cd00320">
    <property type="entry name" value="cpn10"/>
    <property type="match status" value="1"/>
</dbReference>
<dbReference type="FunFam" id="2.30.33.40:FF:000001">
    <property type="entry name" value="10 kDa chaperonin"/>
    <property type="match status" value="1"/>
</dbReference>
<dbReference type="Gene3D" id="2.30.33.40">
    <property type="entry name" value="GroES chaperonin"/>
    <property type="match status" value="1"/>
</dbReference>
<dbReference type="HAMAP" id="MF_00580">
    <property type="entry name" value="CH10"/>
    <property type="match status" value="1"/>
</dbReference>
<dbReference type="InterPro" id="IPR020818">
    <property type="entry name" value="Chaperonin_GroES"/>
</dbReference>
<dbReference type="InterPro" id="IPR037124">
    <property type="entry name" value="Chaperonin_GroES_sf"/>
</dbReference>
<dbReference type="InterPro" id="IPR018369">
    <property type="entry name" value="Chaprnonin_Cpn10_CS"/>
</dbReference>
<dbReference type="InterPro" id="IPR011032">
    <property type="entry name" value="GroES-like_sf"/>
</dbReference>
<dbReference type="NCBIfam" id="NF001526">
    <property type="entry name" value="PRK00364.1-1"/>
    <property type="match status" value="1"/>
</dbReference>
<dbReference type="PANTHER" id="PTHR10772">
    <property type="entry name" value="10 KDA HEAT SHOCK PROTEIN"/>
    <property type="match status" value="1"/>
</dbReference>
<dbReference type="PANTHER" id="PTHR10772:SF58">
    <property type="entry name" value="CO-CHAPERONIN GROES"/>
    <property type="match status" value="1"/>
</dbReference>
<dbReference type="Pfam" id="PF00166">
    <property type="entry name" value="Cpn10"/>
    <property type="match status" value="1"/>
</dbReference>
<dbReference type="PRINTS" id="PR00297">
    <property type="entry name" value="CHAPERONIN10"/>
</dbReference>
<dbReference type="SMART" id="SM00883">
    <property type="entry name" value="Cpn10"/>
    <property type="match status" value="1"/>
</dbReference>
<dbReference type="SUPFAM" id="SSF50129">
    <property type="entry name" value="GroES-like"/>
    <property type="match status" value="1"/>
</dbReference>
<dbReference type="PROSITE" id="PS00681">
    <property type="entry name" value="CHAPERONINS_CPN10"/>
    <property type="match status" value="1"/>
</dbReference>
<name>CH10_ACTP2</name>
<protein>
    <recommendedName>
        <fullName evidence="1">Co-chaperonin GroES</fullName>
    </recommendedName>
    <alternativeName>
        <fullName evidence="1">10 kDa chaperonin</fullName>
    </alternativeName>
    <alternativeName>
        <fullName evidence="1">Chaperonin-10</fullName>
        <shortName evidence="1">Cpn10</shortName>
    </alternativeName>
</protein>
<accession>A3N121</accession>
<proteinExistence type="inferred from homology"/>
<keyword id="KW-0143">Chaperone</keyword>
<keyword id="KW-0963">Cytoplasm</keyword>
<keyword id="KW-1185">Reference proteome</keyword>
<organism>
    <name type="scientific">Actinobacillus pleuropneumoniae serotype 5b (strain L20)</name>
    <dbReference type="NCBI Taxonomy" id="416269"/>
    <lineage>
        <taxon>Bacteria</taxon>
        <taxon>Pseudomonadati</taxon>
        <taxon>Pseudomonadota</taxon>
        <taxon>Gammaproteobacteria</taxon>
        <taxon>Pasteurellales</taxon>
        <taxon>Pasteurellaceae</taxon>
        <taxon>Actinobacillus</taxon>
    </lineage>
</organism>
<gene>
    <name evidence="1" type="primary">groES</name>
    <name evidence="1" type="synonym">groS</name>
    <name type="ordered locus">APL_1013</name>
</gene>
<evidence type="ECO:0000255" key="1">
    <source>
        <dbReference type="HAMAP-Rule" id="MF_00580"/>
    </source>
</evidence>
<comment type="function">
    <text evidence="1">Together with the chaperonin GroEL, plays an essential role in assisting protein folding. The GroEL-GroES system forms a nano-cage that allows encapsulation of the non-native substrate proteins and provides a physical environment optimized to promote and accelerate protein folding. GroES binds to the apical surface of the GroEL ring, thereby capping the opening of the GroEL channel.</text>
</comment>
<comment type="subunit">
    <text evidence="1">Heptamer of 7 subunits arranged in a ring. Interacts with the chaperonin GroEL.</text>
</comment>
<comment type="subcellular location">
    <subcellularLocation>
        <location evidence="1">Cytoplasm</location>
    </subcellularLocation>
</comment>
<comment type="similarity">
    <text evidence="1">Belongs to the GroES chaperonin family.</text>
</comment>
<sequence>MTLRPLHDKVILKREEVETRSAGGIVLTGSAATKSTRGKVIAVGTGRLFENGSVQALAVKVGDVVIFNEGYGVKSEKIDGEEVLILSENDILAIVE</sequence>
<feature type="chain" id="PRO_1000025199" description="Co-chaperonin GroES">
    <location>
        <begin position="1"/>
        <end position="96"/>
    </location>
</feature>